<gene>
    <name evidence="1" type="primary">apt</name>
    <name type="ordered locus">SEN0464</name>
</gene>
<sequence>MTATAQQLEFLKNSIKSIQDYPKPGILFRDVTSLLEDPKAYALSIELLVERYKNAGITKVVGTEARGFLFGAPVALGLGVGFVPVRKPRKLPRETIAETYELEYGTDQLEIHVDAIKPGDNVLVVDDLLATGGTIEATVKLIRRLGGKVTDAAFIINLFDLGGEQRLEKQGITCYSLVPFPGH</sequence>
<comment type="function">
    <text evidence="1">Catalyzes a salvage reaction resulting in the formation of AMP, that is energically less costly than de novo synthesis.</text>
</comment>
<comment type="catalytic activity">
    <reaction evidence="1">
        <text>AMP + diphosphate = 5-phospho-alpha-D-ribose 1-diphosphate + adenine</text>
        <dbReference type="Rhea" id="RHEA:16609"/>
        <dbReference type="ChEBI" id="CHEBI:16708"/>
        <dbReference type="ChEBI" id="CHEBI:33019"/>
        <dbReference type="ChEBI" id="CHEBI:58017"/>
        <dbReference type="ChEBI" id="CHEBI:456215"/>
        <dbReference type="EC" id="2.4.2.7"/>
    </reaction>
</comment>
<comment type="pathway">
    <text evidence="1">Purine metabolism; AMP biosynthesis via salvage pathway; AMP from adenine: step 1/1.</text>
</comment>
<comment type="subunit">
    <text evidence="1">Homodimer.</text>
</comment>
<comment type="subcellular location">
    <subcellularLocation>
        <location evidence="1">Cytoplasm</location>
    </subcellularLocation>
</comment>
<comment type="similarity">
    <text evidence="1">Belongs to the purine/pyrimidine phosphoribosyltransferase family.</text>
</comment>
<proteinExistence type="inferred from homology"/>
<protein>
    <recommendedName>
        <fullName evidence="1">Adenine phosphoribosyltransferase</fullName>
        <shortName evidence="1">APRT</shortName>
        <ecNumber evidence="1">2.4.2.7</ecNumber>
    </recommendedName>
</protein>
<accession>B5QU72</accession>
<dbReference type="EC" id="2.4.2.7" evidence="1"/>
<dbReference type="EMBL" id="AM933172">
    <property type="protein sequence ID" value="CAR32050.1"/>
    <property type="molecule type" value="Genomic_DNA"/>
</dbReference>
<dbReference type="RefSeq" id="WP_000127350.1">
    <property type="nucleotide sequence ID" value="NC_011294.1"/>
</dbReference>
<dbReference type="SMR" id="B5QU72"/>
<dbReference type="KEGG" id="set:SEN0464"/>
<dbReference type="HOGENOM" id="CLU_063339_3_0_6"/>
<dbReference type="UniPathway" id="UPA00588">
    <property type="reaction ID" value="UER00646"/>
</dbReference>
<dbReference type="Proteomes" id="UP000000613">
    <property type="component" value="Chromosome"/>
</dbReference>
<dbReference type="GO" id="GO:0005829">
    <property type="term" value="C:cytosol"/>
    <property type="evidence" value="ECO:0007669"/>
    <property type="project" value="TreeGrafter"/>
</dbReference>
<dbReference type="GO" id="GO:0003999">
    <property type="term" value="F:adenine phosphoribosyltransferase activity"/>
    <property type="evidence" value="ECO:0007669"/>
    <property type="project" value="UniProtKB-UniRule"/>
</dbReference>
<dbReference type="GO" id="GO:0006168">
    <property type="term" value="P:adenine salvage"/>
    <property type="evidence" value="ECO:0007669"/>
    <property type="project" value="InterPro"/>
</dbReference>
<dbReference type="GO" id="GO:0044209">
    <property type="term" value="P:AMP salvage"/>
    <property type="evidence" value="ECO:0007669"/>
    <property type="project" value="UniProtKB-UniRule"/>
</dbReference>
<dbReference type="GO" id="GO:0006166">
    <property type="term" value="P:purine ribonucleoside salvage"/>
    <property type="evidence" value="ECO:0007669"/>
    <property type="project" value="UniProtKB-KW"/>
</dbReference>
<dbReference type="CDD" id="cd06223">
    <property type="entry name" value="PRTases_typeI"/>
    <property type="match status" value="1"/>
</dbReference>
<dbReference type="FunFam" id="3.40.50.2020:FF:000004">
    <property type="entry name" value="Adenine phosphoribosyltransferase"/>
    <property type="match status" value="1"/>
</dbReference>
<dbReference type="Gene3D" id="3.40.50.2020">
    <property type="match status" value="1"/>
</dbReference>
<dbReference type="HAMAP" id="MF_00004">
    <property type="entry name" value="Aden_phosphoribosyltr"/>
    <property type="match status" value="1"/>
</dbReference>
<dbReference type="InterPro" id="IPR005764">
    <property type="entry name" value="Ade_phspho_trans"/>
</dbReference>
<dbReference type="InterPro" id="IPR050120">
    <property type="entry name" value="Adenine_PRTase"/>
</dbReference>
<dbReference type="InterPro" id="IPR000836">
    <property type="entry name" value="PRibTrfase_dom"/>
</dbReference>
<dbReference type="InterPro" id="IPR029057">
    <property type="entry name" value="PRTase-like"/>
</dbReference>
<dbReference type="NCBIfam" id="TIGR01090">
    <property type="entry name" value="apt"/>
    <property type="match status" value="1"/>
</dbReference>
<dbReference type="NCBIfam" id="NF002632">
    <property type="entry name" value="PRK02304.1-1"/>
    <property type="match status" value="1"/>
</dbReference>
<dbReference type="NCBIfam" id="NF002634">
    <property type="entry name" value="PRK02304.1-3"/>
    <property type="match status" value="1"/>
</dbReference>
<dbReference type="NCBIfam" id="NF002636">
    <property type="entry name" value="PRK02304.1-5"/>
    <property type="match status" value="1"/>
</dbReference>
<dbReference type="PANTHER" id="PTHR11776">
    <property type="entry name" value="ADENINE PHOSPHORIBOSYLTRANSFERASE"/>
    <property type="match status" value="1"/>
</dbReference>
<dbReference type="PANTHER" id="PTHR11776:SF7">
    <property type="entry name" value="PHOSPHORIBOSYLTRANSFERASE DOMAIN-CONTAINING PROTEIN"/>
    <property type="match status" value="1"/>
</dbReference>
<dbReference type="Pfam" id="PF00156">
    <property type="entry name" value="Pribosyltran"/>
    <property type="match status" value="1"/>
</dbReference>
<dbReference type="SUPFAM" id="SSF53271">
    <property type="entry name" value="PRTase-like"/>
    <property type="match status" value="1"/>
</dbReference>
<dbReference type="PROSITE" id="PS00103">
    <property type="entry name" value="PUR_PYR_PR_TRANSFER"/>
    <property type="match status" value="1"/>
</dbReference>
<evidence type="ECO:0000255" key="1">
    <source>
        <dbReference type="HAMAP-Rule" id="MF_00004"/>
    </source>
</evidence>
<name>APT_SALEP</name>
<feature type="chain" id="PRO_1000089000" description="Adenine phosphoribosyltransferase">
    <location>
        <begin position="1"/>
        <end position="183"/>
    </location>
</feature>
<reference key="1">
    <citation type="journal article" date="2008" name="Genome Res.">
        <title>Comparative genome analysis of Salmonella enteritidis PT4 and Salmonella gallinarum 287/91 provides insights into evolutionary and host adaptation pathways.</title>
        <authorList>
            <person name="Thomson N.R."/>
            <person name="Clayton D.J."/>
            <person name="Windhorst D."/>
            <person name="Vernikos G."/>
            <person name="Davidson S."/>
            <person name="Churcher C."/>
            <person name="Quail M.A."/>
            <person name="Stevens M."/>
            <person name="Jones M.A."/>
            <person name="Watson M."/>
            <person name="Barron A."/>
            <person name="Layton A."/>
            <person name="Pickard D."/>
            <person name="Kingsley R.A."/>
            <person name="Bignell A."/>
            <person name="Clark L."/>
            <person name="Harris B."/>
            <person name="Ormond D."/>
            <person name="Abdellah Z."/>
            <person name="Brooks K."/>
            <person name="Cherevach I."/>
            <person name="Chillingworth T."/>
            <person name="Woodward J."/>
            <person name="Norberczak H."/>
            <person name="Lord A."/>
            <person name="Arrowsmith C."/>
            <person name="Jagels K."/>
            <person name="Moule S."/>
            <person name="Mungall K."/>
            <person name="Saunders M."/>
            <person name="Whitehead S."/>
            <person name="Chabalgoity J.A."/>
            <person name="Maskell D."/>
            <person name="Humphreys T."/>
            <person name="Roberts M."/>
            <person name="Barrow P.A."/>
            <person name="Dougan G."/>
            <person name="Parkhill J."/>
        </authorList>
    </citation>
    <scope>NUCLEOTIDE SEQUENCE [LARGE SCALE GENOMIC DNA]</scope>
    <source>
        <strain>P125109</strain>
    </source>
</reference>
<keyword id="KW-0963">Cytoplasm</keyword>
<keyword id="KW-0328">Glycosyltransferase</keyword>
<keyword id="KW-0660">Purine salvage</keyword>
<keyword id="KW-0808">Transferase</keyword>
<organism>
    <name type="scientific">Salmonella enteritidis PT4 (strain P125109)</name>
    <dbReference type="NCBI Taxonomy" id="550537"/>
    <lineage>
        <taxon>Bacteria</taxon>
        <taxon>Pseudomonadati</taxon>
        <taxon>Pseudomonadota</taxon>
        <taxon>Gammaproteobacteria</taxon>
        <taxon>Enterobacterales</taxon>
        <taxon>Enterobacteriaceae</taxon>
        <taxon>Salmonella</taxon>
    </lineage>
</organism>